<keyword id="KW-0687">Ribonucleoprotein</keyword>
<keyword id="KW-0689">Ribosomal protein</keyword>
<accession>Q12ZJ3</accession>
<evidence type="ECO:0000255" key="1">
    <source>
        <dbReference type="HAMAP-Rule" id="MF_00629"/>
    </source>
</evidence>
<evidence type="ECO:0000305" key="2"/>
<gene>
    <name evidence="1" type="primary">rpl39e</name>
    <name type="ordered locus">Mbur_0115</name>
</gene>
<feature type="chain" id="PRO_1000051686" description="Large ribosomal subunit protein eL39">
    <location>
        <begin position="1"/>
        <end position="51"/>
    </location>
</feature>
<name>RL39_METBU</name>
<sequence>MSHNTKGQKIRLAKAHNQNQRVPTWVIIKTNRKVVSHPKRRHWRRNSLDVK</sequence>
<comment type="similarity">
    <text evidence="1">Belongs to the eukaryotic ribosomal protein eL39 family.</text>
</comment>
<dbReference type="EMBL" id="CP000300">
    <property type="protein sequence ID" value="ABE51133.1"/>
    <property type="molecule type" value="Genomic_DNA"/>
</dbReference>
<dbReference type="SMR" id="Q12ZJ3"/>
<dbReference type="STRING" id="259564.Mbur_0115"/>
<dbReference type="KEGG" id="mbu:Mbur_0115"/>
<dbReference type="HOGENOM" id="CLU_181948_4_0_2"/>
<dbReference type="OrthoDB" id="65887at2157"/>
<dbReference type="Proteomes" id="UP000001979">
    <property type="component" value="Chromosome"/>
</dbReference>
<dbReference type="GO" id="GO:1990904">
    <property type="term" value="C:ribonucleoprotein complex"/>
    <property type="evidence" value="ECO:0007669"/>
    <property type="project" value="UniProtKB-KW"/>
</dbReference>
<dbReference type="GO" id="GO:0005840">
    <property type="term" value="C:ribosome"/>
    <property type="evidence" value="ECO:0007669"/>
    <property type="project" value="UniProtKB-KW"/>
</dbReference>
<dbReference type="GO" id="GO:0003735">
    <property type="term" value="F:structural constituent of ribosome"/>
    <property type="evidence" value="ECO:0007669"/>
    <property type="project" value="InterPro"/>
</dbReference>
<dbReference type="GO" id="GO:0006412">
    <property type="term" value="P:translation"/>
    <property type="evidence" value="ECO:0007669"/>
    <property type="project" value="UniProtKB-UniRule"/>
</dbReference>
<dbReference type="FunFam" id="1.10.1620.10:FF:000001">
    <property type="entry name" value="60S ribosomal protein-like L39"/>
    <property type="match status" value="1"/>
</dbReference>
<dbReference type="Gene3D" id="1.10.1620.10">
    <property type="entry name" value="Ribosomal protein L39e"/>
    <property type="match status" value="1"/>
</dbReference>
<dbReference type="HAMAP" id="MF_00629">
    <property type="entry name" value="Ribosomal_eL39"/>
    <property type="match status" value="1"/>
</dbReference>
<dbReference type="InterPro" id="IPR000077">
    <property type="entry name" value="Ribosomal_eL39"/>
</dbReference>
<dbReference type="InterPro" id="IPR020083">
    <property type="entry name" value="Ribosomal_eL39_CS"/>
</dbReference>
<dbReference type="InterPro" id="IPR023626">
    <property type="entry name" value="Ribosomal_eL39_dom_sf"/>
</dbReference>
<dbReference type="NCBIfam" id="NF002316">
    <property type="entry name" value="PRK01242.1"/>
    <property type="match status" value="1"/>
</dbReference>
<dbReference type="Pfam" id="PF00832">
    <property type="entry name" value="Ribosomal_L39"/>
    <property type="match status" value="1"/>
</dbReference>
<dbReference type="SUPFAM" id="SSF48662">
    <property type="entry name" value="Ribosomal protein L39e"/>
    <property type="match status" value="1"/>
</dbReference>
<dbReference type="PROSITE" id="PS00051">
    <property type="entry name" value="RIBOSOMAL_L39E"/>
    <property type="match status" value="1"/>
</dbReference>
<proteinExistence type="inferred from homology"/>
<protein>
    <recommendedName>
        <fullName evidence="1">Large ribosomal subunit protein eL39</fullName>
    </recommendedName>
    <alternativeName>
        <fullName evidence="2">50S ribosomal protein L39e</fullName>
    </alternativeName>
</protein>
<reference key="1">
    <citation type="journal article" date="2009" name="ISME J.">
        <title>The genome sequence of the psychrophilic archaeon, Methanococcoides burtonii: the role of genome evolution in cold adaptation.</title>
        <authorList>
            <person name="Allen M.A."/>
            <person name="Lauro F.M."/>
            <person name="Williams T.J."/>
            <person name="Burg D."/>
            <person name="Siddiqui K.S."/>
            <person name="De Francisci D."/>
            <person name="Chong K.W."/>
            <person name="Pilak O."/>
            <person name="Chew H.H."/>
            <person name="De Maere M.Z."/>
            <person name="Ting L."/>
            <person name="Katrib M."/>
            <person name="Ng C."/>
            <person name="Sowers K.R."/>
            <person name="Galperin M.Y."/>
            <person name="Anderson I.J."/>
            <person name="Ivanova N."/>
            <person name="Dalin E."/>
            <person name="Martinez M."/>
            <person name="Lapidus A."/>
            <person name="Hauser L."/>
            <person name="Land M."/>
            <person name="Thomas T."/>
            <person name="Cavicchioli R."/>
        </authorList>
    </citation>
    <scope>NUCLEOTIDE SEQUENCE [LARGE SCALE GENOMIC DNA]</scope>
    <source>
        <strain>DSM 6242 / NBRC 107633 / OCM 468 / ACE-M</strain>
    </source>
</reference>
<organism>
    <name type="scientific">Methanococcoides burtonii (strain DSM 6242 / NBRC 107633 / OCM 468 / ACE-M)</name>
    <dbReference type="NCBI Taxonomy" id="259564"/>
    <lineage>
        <taxon>Archaea</taxon>
        <taxon>Methanobacteriati</taxon>
        <taxon>Methanobacteriota</taxon>
        <taxon>Stenosarchaea group</taxon>
        <taxon>Methanomicrobia</taxon>
        <taxon>Methanosarcinales</taxon>
        <taxon>Methanosarcinaceae</taxon>
        <taxon>Methanococcoides</taxon>
    </lineage>
</organism>